<sequence length="236" mass="24488">MTATFNCFVTGTDTEIGKTMISTALLHALVQQGVKAAAIKSVAAGATAIQTNEGEVWHNDDADALAQAANVVLPRELATPYLLHEACAPHVSAELQGVAIDIAHIKNCYVQVREMAEAVVVEGVGGFRVPLSDHADTADLARELALPVIMVVGLRLGCLNHALLTADAIAARGLKLVGWVANTVDAGMPFAEDNVAALAARLSAPLLGCVPRLAAPLPAAAAAYLDFSCLPNWPKA</sequence>
<name>BIOD_JANMA</name>
<feature type="chain" id="PRO_1000019561" description="ATP-dependent dethiobiotin synthetase BioD">
    <location>
        <begin position="1"/>
        <end position="236"/>
    </location>
</feature>
<feature type="active site" evidence="1">
    <location>
        <position position="40"/>
    </location>
</feature>
<feature type="binding site" evidence="1">
    <location>
        <position position="19"/>
    </location>
    <ligand>
        <name>Mg(2+)</name>
        <dbReference type="ChEBI" id="CHEBI:18420"/>
    </ligand>
</feature>
<feature type="binding site" evidence="1">
    <location>
        <position position="61"/>
    </location>
    <ligand>
        <name>ATP</name>
        <dbReference type="ChEBI" id="CHEBI:30616"/>
    </ligand>
</feature>
<feature type="binding site" evidence="1">
    <location>
        <position position="61"/>
    </location>
    <ligand>
        <name>Mg(2+)</name>
        <dbReference type="ChEBI" id="CHEBI:18420"/>
    </ligand>
</feature>
<feature type="binding site" evidence="1">
    <location>
        <begin position="122"/>
        <end position="125"/>
    </location>
    <ligand>
        <name>ATP</name>
        <dbReference type="ChEBI" id="CHEBI:30616"/>
    </ligand>
</feature>
<feature type="binding site" evidence="1">
    <location>
        <position position="122"/>
    </location>
    <ligand>
        <name>Mg(2+)</name>
        <dbReference type="ChEBI" id="CHEBI:18420"/>
    </ligand>
</feature>
<feature type="binding site" evidence="1">
    <location>
        <begin position="182"/>
        <end position="183"/>
    </location>
    <ligand>
        <name>ATP</name>
        <dbReference type="ChEBI" id="CHEBI:30616"/>
    </ligand>
</feature>
<feature type="binding site" evidence="1">
    <location>
        <begin position="211"/>
        <end position="213"/>
    </location>
    <ligand>
        <name>ATP</name>
        <dbReference type="ChEBI" id="CHEBI:30616"/>
    </ligand>
</feature>
<comment type="function">
    <text evidence="1">Catalyzes a mechanistically unusual reaction, the ATP-dependent insertion of CO2 between the N7 and N8 nitrogen atoms of 7,8-diaminopelargonic acid (DAPA, also called 7,8-diammoniononanoate) to form a ureido ring.</text>
</comment>
<comment type="catalytic activity">
    <reaction evidence="1">
        <text>(7R,8S)-7,8-diammoniononanoate + CO2 + ATP = (4R,5S)-dethiobiotin + ADP + phosphate + 3 H(+)</text>
        <dbReference type="Rhea" id="RHEA:15805"/>
        <dbReference type="ChEBI" id="CHEBI:15378"/>
        <dbReference type="ChEBI" id="CHEBI:16526"/>
        <dbReference type="ChEBI" id="CHEBI:30616"/>
        <dbReference type="ChEBI" id="CHEBI:43474"/>
        <dbReference type="ChEBI" id="CHEBI:149469"/>
        <dbReference type="ChEBI" id="CHEBI:149473"/>
        <dbReference type="ChEBI" id="CHEBI:456216"/>
        <dbReference type="EC" id="6.3.3.3"/>
    </reaction>
</comment>
<comment type="cofactor">
    <cofactor evidence="1">
        <name>Mg(2+)</name>
        <dbReference type="ChEBI" id="CHEBI:18420"/>
    </cofactor>
</comment>
<comment type="pathway">
    <text evidence="1">Cofactor biosynthesis; biotin biosynthesis; biotin from 7,8-diaminononanoate: step 1/2.</text>
</comment>
<comment type="subunit">
    <text evidence="1">Homodimer.</text>
</comment>
<comment type="subcellular location">
    <subcellularLocation>
        <location evidence="1">Cytoplasm</location>
    </subcellularLocation>
</comment>
<comment type="similarity">
    <text evidence="1">Belongs to the dethiobiotin synthetase family.</text>
</comment>
<accession>A6SU65</accession>
<proteinExistence type="inferred from homology"/>
<gene>
    <name evidence="1" type="primary">bioD</name>
    <name type="ordered locus">mma_0122</name>
</gene>
<protein>
    <recommendedName>
        <fullName evidence="1">ATP-dependent dethiobiotin synthetase BioD</fullName>
        <ecNumber evidence="1">6.3.3.3</ecNumber>
    </recommendedName>
    <alternativeName>
        <fullName evidence="1">DTB synthetase</fullName>
        <shortName evidence="1">DTBS</shortName>
    </alternativeName>
    <alternativeName>
        <fullName evidence="1">Dethiobiotin synthase</fullName>
    </alternativeName>
</protein>
<keyword id="KW-0067">ATP-binding</keyword>
<keyword id="KW-0093">Biotin biosynthesis</keyword>
<keyword id="KW-0963">Cytoplasm</keyword>
<keyword id="KW-0436">Ligase</keyword>
<keyword id="KW-0460">Magnesium</keyword>
<keyword id="KW-0479">Metal-binding</keyword>
<keyword id="KW-0547">Nucleotide-binding</keyword>
<reference key="1">
    <citation type="journal article" date="2007" name="PLoS Genet.">
        <title>Genome analysis of Minibacterium massiliensis highlights the convergent evolution of water-living bacteria.</title>
        <authorList>
            <person name="Audic S."/>
            <person name="Robert C."/>
            <person name="Campagna B."/>
            <person name="Parinello H."/>
            <person name="Claverie J.-M."/>
            <person name="Raoult D."/>
            <person name="Drancourt M."/>
        </authorList>
    </citation>
    <scope>NUCLEOTIDE SEQUENCE [LARGE SCALE GENOMIC DNA]</scope>
    <source>
        <strain>Marseille</strain>
    </source>
</reference>
<organism>
    <name type="scientific">Janthinobacterium sp. (strain Marseille)</name>
    <name type="common">Minibacterium massiliensis</name>
    <dbReference type="NCBI Taxonomy" id="375286"/>
    <lineage>
        <taxon>Bacteria</taxon>
        <taxon>Pseudomonadati</taxon>
        <taxon>Pseudomonadota</taxon>
        <taxon>Betaproteobacteria</taxon>
        <taxon>Burkholderiales</taxon>
        <taxon>Oxalobacteraceae</taxon>
        <taxon>Janthinobacterium</taxon>
    </lineage>
</organism>
<evidence type="ECO:0000255" key="1">
    <source>
        <dbReference type="HAMAP-Rule" id="MF_00336"/>
    </source>
</evidence>
<dbReference type="EC" id="6.3.3.3" evidence="1"/>
<dbReference type="EMBL" id="CP000269">
    <property type="protein sequence ID" value="ABR89188.1"/>
    <property type="molecule type" value="Genomic_DNA"/>
</dbReference>
<dbReference type="RefSeq" id="WP_011979348.1">
    <property type="nucleotide sequence ID" value="NC_009659.1"/>
</dbReference>
<dbReference type="SMR" id="A6SU65"/>
<dbReference type="STRING" id="375286.mma_0122"/>
<dbReference type="KEGG" id="mms:mma_0122"/>
<dbReference type="eggNOG" id="COG0132">
    <property type="taxonomic scope" value="Bacteria"/>
</dbReference>
<dbReference type="HOGENOM" id="CLU_072551_0_0_4"/>
<dbReference type="OrthoDB" id="9802097at2"/>
<dbReference type="UniPathway" id="UPA00078">
    <property type="reaction ID" value="UER00161"/>
</dbReference>
<dbReference type="Proteomes" id="UP000006388">
    <property type="component" value="Chromosome"/>
</dbReference>
<dbReference type="GO" id="GO:0005829">
    <property type="term" value="C:cytosol"/>
    <property type="evidence" value="ECO:0007669"/>
    <property type="project" value="TreeGrafter"/>
</dbReference>
<dbReference type="GO" id="GO:0005524">
    <property type="term" value="F:ATP binding"/>
    <property type="evidence" value="ECO:0007669"/>
    <property type="project" value="UniProtKB-UniRule"/>
</dbReference>
<dbReference type="GO" id="GO:0004141">
    <property type="term" value="F:dethiobiotin synthase activity"/>
    <property type="evidence" value="ECO:0007669"/>
    <property type="project" value="UniProtKB-UniRule"/>
</dbReference>
<dbReference type="GO" id="GO:0000287">
    <property type="term" value="F:magnesium ion binding"/>
    <property type="evidence" value="ECO:0007669"/>
    <property type="project" value="UniProtKB-UniRule"/>
</dbReference>
<dbReference type="GO" id="GO:0009102">
    <property type="term" value="P:biotin biosynthetic process"/>
    <property type="evidence" value="ECO:0007669"/>
    <property type="project" value="UniProtKB-UniRule"/>
</dbReference>
<dbReference type="CDD" id="cd03109">
    <property type="entry name" value="DTBS"/>
    <property type="match status" value="1"/>
</dbReference>
<dbReference type="FunFam" id="3.40.50.300:FF:000292">
    <property type="entry name" value="ATP-dependent dethiobiotin synthetase BioD"/>
    <property type="match status" value="1"/>
</dbReference>
<dbReference type="Gene3D" id="3.40.50.300">
    <property type="entry name" value="P-loop containing nucleotide triphosphate hydrolases"/>
    <property type="match status" value="1"/>
</dbReference>
<dbReference type="HAMAP" id="MF_00336">
    <property type="entry name" value="BioD"/>
    <property type="match status" value="1"/>
</dbReference>
<dbReference type="InterPro" id="IPR004472">
    <property type="entry name" value="DTB_synth_BioD"/>
</dbReference>
<dbReference type="InterPro" id="IPR027417">
    <property type="entry name" value="P-loop_NTPase"/>
</dbReference>
<dbReference type="NCBIfam" id="TIGR00347">
    <property type="entry name" value="bioD"/>
    <property type="match status" value="1"/>
</dbReference>
<dbReference type="PANTHER" id="PTHR43210">
    <property type="entry name" value="DETHIOBIOTIN SYNTHETASE"/>
    <property type="match status" value="1"/>
</dbReference>
<dbReference type="PANTHER" id="PTHR43210:SF5">
    <property type="entry name" value="DETHIOBIOTIN SYNTHETASE"/>
    <property type="match status" value="1"/>
</dbReference>
<dbReference type="Pfam" id="PF13500">
    <property type="entry name" value="AAA_26"/>
    <property type="match status" value="1"/>
</dbReference>
<dbReference type="PIRSF" id="PIRSF006755">
    <property type="entry name" value="DTB_synth"/>
    <property type="match status" value="1"/>
</dbReference>
<dbReference type="SUPFAM" id="SSF52540">
    <property type="entry name" value="P-loop containing nucleoside triphosphate hydrolases"/>
    <property type="match status" value="1"/>
</dbReference>